<proteinExistence type="evidence at protein level"/>
<reference key="1">
    <citation type="journal article" date="2001" name="Genome Res.">
        <title>Towards a catalog of human genes and proteins: sequencing and analysis of 500 novel complete protein coding human cDNAs.</title>
        <authorList>
            <person name="Wiemann S."/>
            <person name="Weil B."/>
            <person name="Wellenreuther R."/>
            <person name="Gassenhuber J."/>
            <person name="Glassl S."/>
            <person name="Ansorge W."/>
            <person name="Boecher M."/>
            <person name="Bloecker H."/>
            <person name="Bauersachs S."/>
            <person name="Blum H."/>
            <person name="Lauber J."/>
            <person name="Duesterhoeft A."/>
            <person name="Beyer A."/>
            <person name="Koehrer K."/>
            <person name="Strack N."/>
            <person name="Mewes H.-W."/>
            <person name="Ottenwaelder B."/>
            <person name="Obermaier B."/>
            <person name="Tampe J."/>
            <person name="Heubner D."/>
            <person name="Wambutt R."/>
            <person name="Korn B."/>
            <person name="Klein M."/>
            <person name="Poustka A."/>
        </authorList>
    </citation>
    <scope>NUCLEOTIDE SEQUENCE [LARGE SCALE MRNA]</scope>
</reference>
<reference key="2">
    <citation type="journal article" date="2004" name="Nat. Genet.">
        <title>Complete sequencing and characterization of 21,243 full-length human cDNAs.</title>
        <authorList>
            <person name="Ota T."/>
            <person name="Suzuki Y."/>
            <person name="Nishikawa T."/>
            <person name="Otsuki T."/>
            <person name="Sugiyama T."/>
            <person name="Irie R."/>
            <person name="Wakamatsu A."/>
            <person name="Hayashi K."/>
            <person name="Sato H."/>
            <person name="Nagai K."/>
            <person name="Kimura K."/>
            <person name="Makita H."/>
            <person name="Sekine M."/>
            <person name="Obayashi M."/>
            <person name="Nishi T."/>
            <person name="Shibahara T."/>
            <person name="Tanaka T."/>
            <person name="Ishii S."/>
            <person name="Yamamoto J."/>
            <person name="Saito K."/>
            <person name="Kawai Y."/>
            <person name="Isono Y."/>
            <person name="Nakamura Y."/>
            <person name="Nagahari K."/>
            <person name="Murakami K."/>
            <person name="Yasuda T."/>
            <person name="Iwayanagi T."/>
            <person name="Wagatsuma M."/>
            <person name="Shiratori A."/>
            <person name="Sudo H."/>
            <person name="Hosoiri T."/>
            <person name="Kaku Y."/>
            <person name="Kodaira H."/>
            <person name="Kondo H."/>
            <person name="Sugawara M."/>
            <person name="Takahashi M."/>
            <person name="Kanda K."/>
            <person name="Yokoi T."/>
            <person name="Furuya T."/>
            <person name="Kikkawa E."/>
            <person name="Omura Y."/>
            <person name="Abe K."/>
            <person name="Kamihara K."/>
            <person name="Katsuta N."/>
            <person name="Sato K."/>
            <person name="Tanikawa M."/>
            <person name="Yamazaki M."/>
            <person name="Ninomiya K."/>
            <person name="Ishibashi T."/>
            <person name="Yamashita H."/>
            <person name="Murakawa K."/>
            <person name="Fujimori K."/>
            <person name="Tanai H."/>
            <person name="Kimata M."/>
            <person name="Watanabe M."/>
            <person name="Hiraoka S."/>
            <person name="Chiba Y."/>
            <person name="Ishida S."/>
            <person name="Ono Y."/>
            <person name="Takiguchi S."/>
            <person name="Watanabe S."/>
            <person name="Yosida M."/>
            <person name="Hotuta T."/>
            <person name="Kusano J."/>
            <person name="Kanehori K."/>
            <person name="Takahashi-Fujii A."/>
            <person name="Hara H."/>
            <person name="Tanase T.-O."/>
            <person name="Nomura Y."/>
            <person name="Togiya S."/>
            <person name="Komai F."/>
            <person name="Hara R."/>
            <person name="Takeuchi K."/>
            <person name="Arita M."/>
            <person name="Imose N."/>
            <person name="Musashino K."/>
            <person name="Yuuki H."/>
            <person name="Oshima A."/>
            <person name="Sasaki N."/>
            <person name="Aotsuka S."/>
            <person name="Yoshikawa Y."/>
            <person name="Matsunawa H."/>
            <person name="Ichihara T."/>
            <person name="Shiohata N."/>
            <person name="Sano S."/>
            <person name="Moriya S."/>
            <person name="Momiyama H."/>
            <person name="Satoh N."/>
            <person name="Takami S."/>
            <person name="Terashima Y."/>
            <person name="Suzuki O."/>
            <person name="Nakagawa S."/>
            <person name="Senoh A."/>
            <person name="Mizoguchi H."/>
            <person name="Goto Y."/>
            <person name="Shimizu F."/>
            <person name="Wakebe H."/>
            <person name="Hishigaki H."/>
            <person name="Watanabe T."/>
            <person name="Sugiyama A."/>
            <person name="Takemoto M."/>
            <person name="Kawakami B."/>
            <person name="Yamazaki M."/>
            <person name="Watanabe K."/>
            <person name="Kumagai A."/>
            <person name="Itakura S."/>
            <person name="Fukuzumi Y."/>
            <person name="Fujimori Y."/>
            <person name="Komiyama M."/>
            <person name="Tashiro H."/>
            <person name="Tanigami A."/>
            <person name="Fujiwara T."/>
            <person name="Ono T."/>
            <person name="Yamada K."/>
            <person name="Fujii Y."/>
            <person name="Ozaki K."/>
            <person name="Hirao M."/>
            <person name="Ohmori Y."/>
            <person name="Kawabata A."/>
            <person name="Hikiji T."/>
            <person name="Kobatake N."/>
            <person name="Inagaki H."/>
            <person name="Ikema Y."/>
            <person name="Okamoto S."/>
            <person name="Okitani R."/>
            <person name="Kawakami T."/>
            <person name="Noguchi S."/>
            <person name="Itoh T."/>
            <person name="Shigeta K."/>
            <person name="Senba T."/>
            <person name="Matsumura K."/>
            <person name="Nakajima Y."/>
            <person name="Mizuno T."/>
            <person name="Morinaga M."/>
            <person name="Sasaki M."/>
            <person name="Togashi T."/>
            <person name="Oyama M."/>
            <person name="Hata H."/>
            <person name="Watanabe M."/>
            <person name="Komatsu T."/>
            <person name="Mizushima-Sugano J."/>
            <person name="Satoh T."/>
            <person name="Shirai Y."/>
            <person name="Takahashi Y."/>
            <person name="Nakagawa K."/>
            <person name="Okumura K."/>
            <person name="Nagase T."/>
            <person name="Nomura N."/>
            <person name="Kikuchi H."/>
            <person name="Masuho Y."/>
            <person name="Yamashita R."/>
            <person name="Nakai K."/>
            <person name="Yada T."/>
            <person name="Nakamura Y."/>
            <person name="Ohara O."/>
            <person name="Isogai T."/>
            <person name="Sugano S."/>
        </authorList>
    </citation>
    <scope>NUCLEOTIDE SEQUENCE [LARGE SCALE MRNA]</scope>
    <source>
        <tissue>Signet-ring cell carcinoma</tissue>
        <tissue>Small intestine</tissue>
    </source>
</reference>
<reference key="3">
    <citation type="journal article" date="2005" name="Nature">
        <title>Generation and annotation of the DNA sequences of human chromosomes 2 and 4.</title>
        <authorList>
            <person name="Hillier L.W."/>
            <person name="Graves T.A."/>
            <person name="Fulton R.S."/>
            <person name="Fulton L.A."/>
            <person name="Pepin K.H."/>
            <person name="Minx P."/>
            <person name="Wagner-McPherson C."/>
            <person name="Layman D."/>
            <person name="Wylie K."/>
            <person name="Sekhon M."/>
            <person name="Becker M.C."/>
            <person name="Fewell G.A."/>
            <person name="Delehaunty K.D."/>
            <person name="Miner T.L."/>
            <person name="Nash W.E."/>
            <person name="Kremitzki C."/>
            <person name="Oddy L."/>
            <person name="Du H."/>
            <person name="Sun H."/>
            <person name="Bradshaw-Cordum H."/>
            <person name="Ali J."/>
            <person name="Carter J."/>
            <person name="Cordes M."/>
            <person name="Harris A."/>
            <person name="Isak A."/>
            <person name="van Brunt A."/>
            <person name="Nguyen C."/>
            <person name="Du F."/>
            <person name="Courtney L."/>
            <person name="Kalicki J."/>
            <person name="Ozersky P."/>
            <person name="Abbott S."/>
            <person name="Armstrong J."/>
            <person name="Belter E.A."/>
            <person name="Caruso L."/>
            <person name="Cedroni M."/>
            <person name="Cotton M."/>
            <person name="Davidson T."/>
            <person name="Desai A."/>
            <person name="Elliott G."/>
            <person name="Erb T."/>
            <person name="Fronick C."/>
            <person name="Gaige T."/>
            <person name="Haakenson W."/>
            <person name="Haglund K."/>
            <person name="Holmes A."/>
            <person name="Harkins R."/>
            <person name="Kim K."/>
            <person name="Kruchowski S.S."/>
            <person name="Strong C.M."/>
            <person name="Grewal N."/>
            <person name="Goyea E."/>
            <person name="Hou S."/>
            <person name="Levy A."/>
            <person name="Martinka S."/>
            <person name="Mead K."/>
            <person name="McLellan M.D."/>
            <person name="Meyer R."/>
            <person name="Randall-Maher J."/>
            <person name="Tomlinson C."/>
            <person name="Dauphin-Kohlberg S."/>
            <person name="Kozlowicz-Reilly A."/>
            <person name="Shah N."/>
            <person name="Swearengen-Shahid S."/>
            <person name="Snider J."/>
            <person name="Strong J.T."/>
            <person name="Thompson J."/>
            <person name="Yoakum M."/>
            <person name="Leonard S."/>
            <person name="Pearman C."/>
            <person name="Trani L."/>
            <person name="Radionenko M."/>
            <person name="Waligorski J.E."/>
            <person name="Wang C."/>
            <person name="Rock S.M."/>
            <person name="Tin-Wollam A.-M."/>
            <person name="Maupin R."/>
            <person name="Latreille P."/>
            <person name="Wendl M.C."/>
            <person name="Yang S.-P."/>
            <person name="Pohl C."/>
            <person name="Wallis J.W."/>
            <person name="Spieth J."/>
            <person name="Bieri T.A."/>
            <person name="Berkowicz N."/>
            <person name="Nelson J.O."/>
            <person name="Osborne J."/>
            <person name="Ding L."/>
            <person name="Meyer R."/>
            <person name="Sabo A."/>
            <person name="Shotland Y."/>
            <person name="Sinha P."/>
            <person name="Wohldmann P.E."/>
            <person name="Cook L.L."/>
            <person name="Hickenbotham M.T."/>
            <person name="Eldred J."/>
            <person name="Williams D."/>
            <person name="Jones T.A."/>
            <person name="She X."/>
            <person name="Ciccarelli F.D."/>
            <person name="Izaurralde E."/>
            <person name="Taylor J."/>
            <person name="Schmutz J."/>
            <person name="Myers R.M."/>
            <person name="Cox D.R."/>
            <person name="Huang X."/>
            <person name="McPherson J.D."/>
            <person name="Mardis E.R."/>
            <person name="Clifton S.W."/>
            <person name="Warren W.C."/>
            <person name="Chinwalla A.T."/>
            <person name="Eddy S.R."/>
            <person name="Marra M.A."/>
            <person name="Ovcharenko I."/>
            <person name="Furey T.S."/>
            <person name="Miller W."/>
            <person name="Eichler E.E."/>
            <person name="Bork P."/>
            <person name="Suyama M."/>
            <person name="Torrents D."/>
            <person name="Waterston R.H."/>
            <person name="Wilson R.K."/>
        </authorList>
    </citation>
    <scope>NUCLEOTIDE SEQUENCE [LARGE SCALE GENOMIC DNA]</scope>
</reference>
<reference key="4">
    <citation type="submission" date="2005-09" db="EMBL/GenBank/DDBJ databases">
        <authorList>
            <person name="Mural R.J."/>
            <person name="Istrail S."/>
            <person name="Sutton G.G."/>
            <person name="Florea L."/>
            <person name="Halpern A.L."/>
            <person name="Mobarry C.M."/>
            <person name="Lippert R."/>
            <person name="Walenz B."/>
            <person name="Shatkay H."/>
            <person name="Dew I."/>
            <person name="Miller J.R."/>
            <person name="Flanigan M.J."/>
            <person name="Edwards N.J."/>
            <person name="Bolanos R."/>
            <person name="Fasulo D."/>
            <person name="Halldorsson B.V."/>
            <person name="Hannenhalli S."/>
            <person name="Turner R."/>
            <person name="Yooseph S."/>
            <person name="Lu F."/>
            <person name="Nusskern D.R."/>
            <person name="Shue B.C."/>
            <person name="Zheng X.H."/>
            <person name="Zhong F."/>
            <person name="Delcher A.L."/>
            <person name="Huson D.H."/>
            <person name="Kravitz S.A."/>
            <person name="Mouchard L."/>
            <person name="Reinert K."/>
            <person name="Remington K.A."/>
            <person name="Clark A.G."/>
            <person name="Waterman M.S."/>
            <person name="Eichler E.E."/>
            <person name="Adams M.D."/>
            <person name="Hunkapiller M.W."/>
            <person name="Myers E.W."/>
            <person name="Venter J.C."/>
        </authorList>
    </citation>
    <scope>NUCLEOTIDE SEQUENCE [LARGE SCALE GENOMIC DNA]</scope>
</reference>
<reference key="5">
    <citation type="journal article" date="2004" name="Genome Res.">
        <title>The status, quality, and expansion of the NIH full-length cDNA project: the Mammalian Gene Collection (MGC).</title>
        <authorList>
            <consortium name="The MGC Project Team"/>
        </authorList>
    </citation>
    <scope>NUCLEOTIDE SEQUENCE [LARGE SCALE MRNA]</scope>
    <source>
        <tissue>Placenta</tissue>
        <tissue>Skin</tissue>
    </source>
</reference>
<organism>
    <name type="scientific">Homo sapiens</name>
    <name type="common">Human</name>
    <dbReference type="NCBI Taxonomy" id="9606"/>
    <lineage>
        <taxon>Eukaryota</taxon>
        <taxon>Metazoa</taxon>
        <taxon>Chordata</taxon>
        <taxon>Craniata</taxon>
        <taxon>Vertebrata</taxon>
        <taxon>Euteleostomi</taxon>
        <taxon>Mammalia</taxon>
        <taxon>Eutheria</taxon>
        <taxon>Euarchontoglires</taxon>
        <taxon>Primates</taxon>
        <taxon>Haplorrhini</taxon>
        <taxon>Catarrhini</taxon>
        <taxon>Hominidae</taxon>
        <taxon>Homo</taxon>
    </lineage>
</organism>
<protein>
    <recommendedName>
        <fullName>Uncharacterized protein C2orf42</fullName>
    </recommendedName>
</protein>
<name>CB042_HUMAN</name>
<dbReference type="EMBL" id="AL136834">
    <property type="protein sequence ID" value="CAB66768.1"/>
    <property type="molecule type" value="mRNA"/>
</dbReference>
<dbReference type="EMBL" id="AK000565">
    <property type="protein sequence ID" value="BAA91258.1"/>
    <property type="molecule type" value="mRNA"/>
</dbReference>
<dbReference type="EMBL" id="AK026303">
    <property type="protein sequence ID" value="BAB15438.1"/>
    <property type="molecule type" value="mRNA"/>
</dbReference>
<dbReference type="EMBL" id="AC016700">
    <property type="protein sequence ID" value="AAX93192.1"/>
    <property type="molecule type" value="Genomic_DNA"/>
</dbReference>
<dbReference type="EMBL" id="CH471053">
    <property type="protein sequence ID" value="EAW99830.1"/>
    <property type="molecule type" value="Genomic_DNA"/>
</dbReference>
<dbReference type="EMBL" id="CH471053">
    <property type="protein sequence ID" value="EAW99831.1"/>
    <property type="molecule type" value="Genomic_DNA"/>
</dbReference>
<dbReference type="EMBL" id="BC002825">
    <property type="protein sequence ID" value="AAH02825.1"/>
    <property type="molecule type" value="mRNA"/>
</dbReference>
<dbReference type="EMBL" id="BC005079">
    <property type="protein sequence ID" value="AAH05079.1"/>
    <property type="molecule type" value="mRNA"/>
</dbReference>
<dbReference type="CCDS" id="CCDS1899.1"/>
<dbReference type="RefSeq" id="NP_001335687.1">
    <property type="nucleotide sequence ID" value="NM_001348758.2"/>
</dbReference>
<dbReference type="RefSeq" id="NP_001335688.1">
    <property type="nucleotide sequence ID" value="NM_001348759.2"/>
</dbReference>
<dbReference type="RefSeq" id="NP_001335689.1">
    <property type="nucleotide sequence ID" value="NM_001348760.2"/>
</dbReference>
<dbReference type="RefSeq" id="NP_001335690.1">
    <property type="nucleotide sequence ID" value="NM_001348761.2"/>
</dbReference>
<dbReference type="RefSeq" id="NP_001335691.1">
    <property type="nucleotide sequence ID" value="NM_001348762.2"/>
</dbReference>
<dbReference type="RefSeq" id="NP_001335692.1">
    <property type="nucleotide sequence ID" value="NM_001348763.2"/>
</dbReference>
<dbReference type="RefSeq" id="NP_001335693.1">
    <property type="nucleotide sequence ID" value="NM_001348764.2"/>
</dbReference>
<dbReference type="RefSeq" id="NP_060350.1">
    <property type="nucleotide sequence ID" value="NM_017880.3"/>
</dbReference>
<dbReference type="RefSeq" id="XP_047300794.1">
    <property type="nucleotide sequence ID" value="XM_047444838.1"/>
</dbReference>
<dbReference type="BioGRID" id="120316">
    <property type="interactions" value="8"/>
</dbReference>
<dbReference type="FunCoup" id="Q9NWW7">
    <property type="interactions" value="3584"/>
</dbReference>
<dbReference type="IntAct" id="Q9NWW7">
    <property type="interactions" value="6"/>
</dbReference>
<dbReference type="STRING" id="9606.ENSP00000264434"/>
<dbReference type="GlyGen" id="Q9NWW7">
    <property type="glycosylation" value="1 site, 1 O-linked glycan (1 site)"/>
</dbReference>
<dbReference type="iPTMnet" id="Q9NWW7"/>
<dbReference type="PhosphoSitePlus" id="Q9NWW7"/>
<dbReference type="BioMuta" id="C2orf42"/>
<dbReference type="DMDM" id="74734680"/>
<dbReference type="jPOST" id="Q9NWW7"/>
<dbReference type="MassIVE" id="Q9NWW7"/>
<dbReference type="PaxDb" id="9606-ENSP00000264434"/>
<dbReference type="PeptideAtlas" id="Q9NWW7"/>
<dbReference type="ProteomicsDB" id="82994"/>
<dbReference type="Antibodypedia" id="31065">
    <property type="antibodies" value="88 antibodies from 15 providers"/>
</dbReference>
<dbReference type="DNASU" id="54980"/>
<dbReference type="Ensembl" id="ENST00000264434.7">
    <property type="protein sequence ID" value="ENSP00000264434.2"/>
    <property type="gene ID" value="ENSG00000115998.8"/>
</dbReference>
<dbReference type="Ensembl" id="ENST00000420306.1">
    <property type="protein sequence ID" value="ENSP00000404515.1"/>
    <property type="gene ID" value="ENSG00000115998.8"/>
</dbReference>
<dbReference type="GeneID" id="54980"/>
<dbReference type="KEGG" id="hsa:54980"/>
<dbReference type="MANE-Select" id="ENST00000264434.7">
    <property type="protein sequence ID" value="ENSP00000264434.2"/>
    <property type="RefSeq nucleotide sequence ID" value="NM_017880.3"/>
    <property type="RefSeq protein sequence ID" value="NP_060350.1"/>
</dbReference>
<dbReference type="UCSC" id="uc002sgh.4">
    <property type="organism name" value="human"/>
</dbReference>
<dbReference type="AGR" id="HGNC:26056"/>
<dbReference type="CTD" id="54980"/>
<dbReference type="DisGeNET" id="54980"/>
<dbReference type="GeneCards" id="C2orf42"/>
<dbReference type="HGNC" id="HGNC:26056">
    <property type="gene designation" value="C2orf42"/>
</dbReference>
<dbReference type="HPA" id="ENSG00000115998">
    <property type="expression patterns" value="Tissue enhanced (testis)"/>
</dbReference>
<dbReference type="neXtProt" id="NX_Q9NWW7"/>
<dbReference type="OpenTargets" id="ENSG00000115998"/>
<dbReference type="PharmGKB" id="PA147358740"/>
<dbReference type="VEuPathDB" id="HostDB:ENSG00000115998"/>
<dbReference type="eggNOG" id="ENOG502R3NH">
    <property type="taxonomic scope" value="Eukaryota"/>
</dbReference>
<dbReference type="GeneTree" id="ENSGT00390000011031"/>
<dbReference type="HOGENOM" id="CLU_022155_0_0_1"/>
<dbReference type="InParanoid" id="Q9NWW7"/>
<dbReference type="OMA" id="FWMPSQL"/>
<dbReference type="OrthoDB" id="6506929at2759"/>
<dbReference type="PAN-GO" id="Q9NWW7">
    <property type="GO annotations" value="1 GO annotation based on evolutionary models"/>
</dbReference>
<dbReference type="PhylomeDB" id="Q9NWW7"/>
<dbReference type="TreeFam" id="TF323774"/>
<dbReference type="PathwayCommons" id="Q9NWW7"/>
<dbReference type="SignaLink" id="Q9NWW7"/>
<dbReference type="BioGRID-ORCS" id="54980">
    <property type="hits" value="11 hits in 1130 CRISPR screens"/>
</dbReference>
<dbReference type="ChiTaRS" id="C2orf42">
    <property type="organism name" value="human"/>
</dbReference>
<dbReference type="GenomeRNAi" id="54980"/>
<dbReference type="Pharos" id="Q9NWW7">
    <property type="development level" value="Tdark"/>
</dbReference>
<dbReference type="PRO" id="PR:Q9NWW7"/>
<dbReference type="Proteomes" id="UP000005640">
    <property type="component" value="Chromosome 2"/>
</dbReference>
<dbReference type="RNAct" id="Q9NWW7">
    <property type="molecule type" value="protein"/>
</dbReference>
<dbReference type="Bgee" id="ENSG00000115998">
    <property type="expression patterns" value="Expressed in sperm and 180 other cell types or tissues"/>
</dbReference>
<dbReference type="ExpressionAtlas" id="Q9NWW7">
    <property type="expression patterns" value="baseline and differential"/>
</dbReference>
<dbReference type="GO" id="GO:0005654">
    <property type="term" value="C:nucleoplasm"/>
    <property type="evidence" value="ECO:0000314"/>
    <property type="project" value="HPA"/>
</dbReference>
<dbReference type="GO" id="GO:0005634">
    <property type="term" value="C:nucleus"/>
    <property type="evidence" value="ECO:0000318"/>
    <property type="project" value="GO_Central"/>
</dbReference>
<dbReference type="InterPro" id="IPR026049">
    <property type="entry name" value="C2orf42"/>
</dbReference>
<dbReference type="InterPro" id="IPR029269">
    <property type="entry name" value="Zf-tcix"/>
</dbReference>
<dbReference type="PANTHER" id="PTHR13518:SF1">
    <property type="entry name" value="C2ORF42 HOMOLOG"/>
    <property type="match status" value="1"/>
</dbReference>
<dbReference type="PANTHER" id="PTHR13518">
    <property type="entry name" value="PUTATIVE TREBLE-CLEF ZINC-FINGER C2ORF42 FAMILY MEMBER"/>
    <property type="match status" value="1"/>
</dbReference>
<dbReference type="Pfam" id="PF14952">
    <property type="entry name" value="zf-tcix"/>
    <property type="match status" value="1"/>
</dbReference>
<feature type="chain" id="PRO_0000300121" description="Uncharacterized protein C2orf42">
    <location>
        <begin position="1"/>
        <end position="574"/>
    </location>
</feature>
<feature type="sequence variant" id="VAR_050712" description="In dbSNP:rs3213941.">
    <original>Q</original>
    <variation>P</variation>
    <location>
        <position position="314"/>
    </location>
</feature>
<accession>Q9NWW7</accession>
<accession>D6W5G3</accession>
<accession>Q9H629</accession>
<comment type="interaction">
    <interactant intactId="EBI-2812028">
        <id>Q9NWW7</id>
    </interactant>
    <interactant intactId="EBI-3905054">
        <id>P13196</id>
        <label>ALAS1</label>
    </interactant>
    <organismsDiffer>false</organismsDiffer>
    <experiments>3</experiments>
</comment>
<comment type="interaction">
    <interactant intactId="EBI-2812028">
        <id>Q9NWW7</id>
    </interactant>
    <interactant intactId="EBI-1105153">
        <id>Q96KQ4</id>
        <label>PPP1R13B</label>
    </interactant>
    <organismsDiffer>false</organismsDiffer>
    <experiments>3</experiments>
</comment>
<comment type="interaction">
    <interactant intactId="EBI-2812028">
        <id>Q9NWW7</id>
    </interactant>
    <interactant intactId="EBI-1053424">
        <id>O43741</id>
        <label>PRKAB2</label>
    </interactant>
    <organismsDiffer>false</organismsDiffer>
    <experiments>3</experiments>
</comment>
<comment type="interaction">
    <interactant intactId="EBI-2812028">
        <id>Q9NWW7</id>
    </interactant>
    <interactant intactId="EBI-3939165">
        <id>O43711</id>
        <label>TLX3</label>
    </interactant>
    <organismsDiffer>false</organismsDiffer>
    <experiments>3</experiments>
</comment>
<sequence>MEPNSLRTKVPAFLSDLGKATLRGIRKCPRCGTYNGTRGLSCKNKTCGTIFRYGARKQPSVEAVKIITGSDLQVYSVRQRDRGPDYRCFVELGVSETTIQTVDGTIITQLSSGRCYVPSCLKAATQGVVENQCQHIKLAVNCQAEATPLTLKSSVLNAMQASPETKQTIWQLATEPTGPLVQRITKNILVVKCKASQKHSLGYLHTSFVQKVSGKSLPERRFFCSCQTLKSHKSNASKDETAQRCIHFFACICAFASDETLAQEFSDFLNFDSSGLKEIIVPQLGCHSESTVSACESTASKSKKRRKDEVSGAQMNSSLLPQDAVSSNLRKSGLKKPVVASSLKRQACGQLLDEAQVTLSFQDWLASVTERIHQTMHYQFDGKPEPLVFHIPQSFFDALQQRISIGSAKKRLPNSTTAFVRKDALPLGTFSKYTWHITNILQVKQILDTPEMPLEITRSFIQNRDGTYELFKCPKVEVESIAETYGRIEKQPVLRPLELKTFLKVGNTSPDQKEPTPFIIEWIPDILPQSKIGELRIKFEYGHHRNGHVAEYQDQRPPLDQPLELAPLTTITFP</sequence>
<keyword id="KW-1267">Proteomics identification</keyword>
<keyword id="KW-1185">Reference proteome</keyword>
<gene>
    <name type="primary">C2orf42</name>
</gene>